<sequence length="206" mass="23077">MTKLSKRQLDILRFIKEEVKTKGYPPSVREIGEAVGLASSSTVHGHLARLETKGLIRRDPTKPRAIEVLDEEEVQIPKSQVVNVPVIGKVTAGIPITAVENIDEYFPLPDRMVPPGEHVFMLEIMGESMIDAGIFDKDYVIVKQQNTANNGEIVVAMTEDDEATVKRFYKEDNYVRLQPENPTMEPIILQNVSILGKVIGVFRTVH</sequence>
<organism>
    <name type="scientific">Bacillus velezensis (strain DSM 23117 / BGSC 10A6 / LMG 26770 / FZB42)</name>
    <name type="common">Bacillus amyloliquefaciens subsp. plantarum</name>
    <dbReference type="NCBI Taxonomy" id="326423"/>
    <lineage>
        <taxon>Bacteria</taxon>
        <taxon>Bacillati</taxon>
        <taxon>Bacillota</taxon>
        <taxon>Bacilli</taxon>
        <taxon>Bacillales</taxon>
        <taxon>Bacillaceae</taxon>
        <taxon>Bacillus</taxon>
        <taxon>Bacillus amyloliquefaciens group</taxon>
    </lineage>
</organism>
<feature type="chain" id="PRO_1000001258" description="LexA repressor">
    <location>
        <begin position="1"/>
        <end position="206"/>
    </location>
</feature>
<feature type="DNA-binding region" description="H-T-H motif" evidence="1">
    <location>
        <begin position="28"/>
        <end position="48"/>
    </location>
</feature>
<feature type="active site" description="For autocatalytic cleavage activity" evidence="1">
    <location>
        <position position="128"/>
    </location>
</feature>
<feature type="active site" description="For autocatalytic cleavage activity" evidence="1">
    <location>
        <position position="166"/>
    </location>
</feature>
<feature type="site" description="Cleavage; by autolysis" evidence="1">
    <location>
        <begin position="92"/>
        <end position="93"/>
    </location>
</feature>
<gene>
    <name evidence="1" type="primary">lexA</name>
    <name type="ordered locus">RBAM_017650</name>
</gene>
<comment type="function">
    <text evidence="1">Represses a number of genes involved in the response to DNA damage (SOS response), including recA and lexA. In the presence of single-stranded DNA, RecA interacts with LexA causing an autocatalytic cleavage which disrupts the DNA-binding part of LexA, leading to derepression of the SOS regulon and eventually DNA repair.</text>
</comment>
<comment type="catalytic activity">
    <reaction evidence="1">
        <text>Hydrolysis of Ala-|-Gly bond in repressor LexA.</text>
        <dbReference type="EC" id="3.4.21.88"/>
    </reaction>
</comment>
<comment type="subunit">
    <text evidence="1">Homodimer.</text>
</comment>
<comment type="similarity">
    <text evidence="1">Belongs to the peptidase S24 family.</text>
</comment>
<name>LEXA_BACVZ</name>
<protein>
    <recommendedName>
        <fullName evidence="1">LexA repressor</fullName>
        <ecNumber evidence="1">3.4.21.88</ecNumber>
    </recommendedName>
</protein>
<accession>A7Z552</accession>
<reference key="1">
    <citation type="journal article" date="2007" name="Nat. Biotechnol.">
        <title>Comparative analysis of the complete genome sequence of the plant growth-promoting bacterium Bacillus amyloliquefaciens FZB42.</title>
        <authorList>
            <person name="Chen X.H."/>
            <person name="Koumoutsi A."/>
            <person name="Scholz R."/>
            <person name="Eisenreich A."/>
            <person name="Schneider K."/>
            <person name="Heinemeyer I."/>
            <person name="Morgenstern B."/>
            <person name="Voss B."/>
            <person name="Hess W.R."/>
            <person name="Reva O."/>
            <person name="Junge H."/>
            <person name="Voigt B."/>
            <person name="Jungblut P.R."/>
            <person name="Vater J."/>
            <person name="Suessmuth R."/>
            <person name="Liesegang H."/>
            <person name="Strittmatter A."/>
            <person name="Gottschalk G."/>
            <person name="Borriss R."/>
        </authorList>
    </citation>
    <scope>NUCLEOTIDE SEQUENCE [LARGE SCALE GENOMIC DNA]</scope>
    <source>
        <strain>DSM 23117 / BGSC 10A6 / LMG 26770 / FZB42</strain>
    </source>
</reference>
<proteinExistence type="inferred from homology"/>
<keyword id="KW-0068">Autocatalytic cleavage</keyword>
<keyword id="KW-0227">DNA damage</keyword>
<keyword id="KW-0234">DNA repair</keyword>
<keyword id="KW-0235">DNA replication</keyword>
<keyword id="KW-0238">DNA-binding</keyword>
<keyword id="KW-0378">Hydrolase</keyword>
<keyword id="KW-0678">Repressor</keyword>
<keyword id="KW-0742">SOS response</keyword>
<keyword id="KW-0804">Transcription</keyword>
<keyword id="KW-0805">Transcription regulation</keyword>
<dbReference type="EC" id="3.4.21.88" evidence="1"/>
<dbReference type="EMBL" id="CP000560">
    <property type="protein sequence ID" value="ABS74128.1"/>
    <property type="molecule type" value="Genomic_DNA"/>
</dbReference>
<dbReference type="RefSeq" id="WP_012117646.1">
    <property type="nucleotide sequence ID" value="NC_009725.2"/>
</dbReference>
<dbReference type="SMR" id="A7Z552"/>
<dbReference type="MEROPS" id="S24.001"/>
<dbReference type="GeneID" id="93080897"/>
<dbReference type="KEGG" id="bay:RBAM_017650"/>
<dbReference type="HOGENOM" id="CLU_066192_45_1_9"/>
<dbReference type="Proteomes" id="UP000001120">
    <property type="component" value="Chromosome"/>
</dbReference>
<dbReference type="GO" id="GO:0003677">
    <property type="term" value="F:DNA binding"/>
    <property type="evidence" value="ECO:0007669"/>
    <property type="project" value="UniProtKB-UniRule"/>
</dbReference>
<dbReference type="GO" id="GO:0004252">
    <property type="term" value="F:serine-type endopeptidase activity"/>
    <property type="evidence" value="ECO:0007669"/>
    <property type="project" value="UniProtKB-UniRule"/>
</dbReference>
<dbReference type="GO" id="GO:0006281">
    <property type="term" value="P:DNA repair"/>
    <property type="evidence" value="ECO:0007669"/>
    <property type="project" value="UniProtKB-UniRule"/>
</dbReference>
<dbReference type="GO" id="GO:0006260">
    <property type="term" value="P:DNA replication"/>
    <property type="evidence" value="ECO:0007669"/>
    <property type="project" value="UniProtKB-UniRule"/>
</dbReference>
<dbReference type="GO" id="GO:0045892">
    <property type="term" value="P:negative regulation of DNA-templated transcription"/>
    <property type="evidence" value="ECO:0007669"/>
    <property type="project" value="UniProtKB-UniRule"/>
</dbReference>
<dbReference type="GO" id="GO:0006508">
    <property type="term" value="P:proteolysis"/>
    <property type="evidence" value="ECO:0007669"/>
    <property type="project" value="InterPro"/>
</dbReference>
<dbReference type="GO" id="GO:0009432">
    <property type="term" value="P:SOS response"/>
    <property type="evidence" value="ECO:0007669"/>
    <property type="project" value="UniProtKB-UniRule"/>
</dbReference>
<dbReference type="CDD" id="cd00090">
    <property type="entry name" value="HTH_ARSR"/>
    <property type="match status" value="1"/>
</dbReference>
<dbReference type="CDD" id="cd06529">
    <property type="entry name" value="S24_LexA-like"/>
    <property type="match status" value="1"/>
</dbReference>
<dbReference type="FunFam" id="1.10.10.10:FF:000009">
    <property type="entry name" value="LexA repressor"/>
    <property type="match status" value="1"/>
</dbReference>
<dbReference type="FunFam" id="2.10.109.10:FF:000001">
    <property type="entry name" value="LexA repressor"/>
    <property type="match status" value="1"/>
</dbReference>
<dbReference type="Gene3D" id="2.10.109.10">
    <property type="entry name" value="Umud Fragment, subunit A"/>
    <property type="match status" value="1"/>
</dbReference>
<dbReference type="Gene3D" id="1.10.10.10">
    <property type="entry name" value="Winged helix-like DNA-binding domain superfamily/Winged helix DNA-binding domain"/>
    <property type="match status" value="1"/>
</dbReference>
<dbReference type="HAMAP" id="MF_00015">
    <property type="entry name" value="LexA"/>
    <property type="match status" value="1"/>
</dbReference>
<dbReference type="InterPro" id="IPR011991">
    <property type="entry name" value="ArsR-like_HTH"/>
</dbReference>
<dbReference type="InterPro" id="IPR006200">
    <property type="entry name" value="LexA"/>
</dbReference>
<dbReference type="InterPro" id="IPR039418">
    <property type="entry name" value="LexA-like"/>
</dbReference>
<dbReference type="InterPro" id="IPR036286">
    <property type="entry name" value="LexA/Signal_pep-like_sf"/>
</dbReference>
<dbReference type="InterPro" id="IPR006199">
    <property type="entry name" value="LexA_DNA-bd_dom"/>
</dbReference>
<dbReference type="InterPro" id="IPR050077">
    <property type="entry name" value="LexA_repressor"/>
</dbReference>
<dbReference type="InterPro" id="IPR006197">
    <property type="entry name" value="Peptidase_S24_LexA"/>
</dbReference>
<dbReference type="InterPro" id="IPR015927">
    <property type="entry name" value="Peptidase_S24_S26A/B/C"/>
</dbReference>
<dbReference type="InterPro" id="IPR036388">
    <property type="entry name" value="WH-like_DNA-bd_sf"/>
</dbReference>
<dbReference type="InterPro" id="IPR036390">
    <property type="entry name" value="WH_DNA-bd_sf"/>
</dbReference>
<dbReference type="NCBIfam" id="TIGR00498">
    <property type="entry name" value="lexA"/>
    <property type="match status" value="1"/>
</dbReference>
<dbReference type="PANTHER" id="PTHR33516">
    <property type="entry name" value="LEXA REPRESSOR"/>
    <property type="match status" value="1"/>
</dbReference>
<dbReference type="PANTHER" id="PTHR33516:SF2">
    <property type="entry name" value="LEXA REPRESSOR-RELATED"/>
    <property type="match status" value="1"/>
</dbReference>
<dbReference type="Pfam" id="PF01726">
    <property type="entry name" value="LexA_DNA_bind"/>
    <property type="match status" value="1"/>
</dbReference>
<dbReference type="Pfam" id="PF00717">
    <property type="entry name" value="Peptidase_S24"/>
    <property type="match status" value="1"/>
</dbReference>
<dbReference type="PRINTS" id="PR00726">
    <property type="entry name" value="LEXASERPTASE"/>
</dbReference>
<dbReference type="SUPFAM" id="SSF51306">
    <property type="entry name" value="LexA/Signal peptidase"/>
    <property type="match status" value="1"/>
</dbReference>
<dbReference type="SUPFAM" id="SSF46785">
    <property type="entry name" value="Winged helix' DNA-binding domain"/>
    <property type="match status" value="1"/>
</dbReference>
<evidence type="ECO:0000255" key="1">
    <source>
        <dbReference type="HAMAP-Rule" id="MF_00015"/>
    </source>
</evidence>